<organism>
    <name type="scientific">Escherichia coli O17:K52:H18 (strain UMN026 / ExPEC)</name>
    <dbReference type="NCBI Taxonomy" id="585056"/>
    <lineage>
        <taxon>Bacteria</taxon>
        <taxon>Pseudomonadati</taxon>
        <taxon>Pseudomonadota</taxon>
        <taxon>Gammaproteobacteria</taxon>
        <taxon>Enterobacterales</taxon>
        <taxon>Enterobacteriaceae</taxon>
        <taxon>Escherichia</taxon>
    </lineage>
</organism>
<gene>
    <name evidence="1" type="primary">fis</name>
    <name type="ordered locus">ECUMN_3735</name>
</gene>
<protein>
    <recommendedName>
        <fullName evidence="1">DNA-binding protein Fis</fullName>
    </recommendedName>
</protein>
<dbReference type="EMBL" id="CU928163">
    <property type="protein sequence ID" value="CAR14889.1"/>
    <property type="molecule type" value="Genomic_DNA"/>
</dbReference>
<dbReference type="RefSeq" id="WP_000462905.1">
    <property type="nucleotide sequence ID" value="NC_011751.1"/>
</dbReference>
<dbReference type="RefSeq" id="YP_002414394.1">
    <property type="nucleotide sequence ID" value="NC_011751.1"/>
</dbReference>
<dbReference type="SMR" id="B7NDN9"/>
<dbReference type="STRING" id="585056.ECUMN_3735"/>
<dbReference type="GeneID" id="98390389"/>
<dbReference type="KEGG" id="eum:ECUMN_3735"/>
<dbReference type="PATRIC" id="fig|585056.7.peg.3917"/>
<dbReference type="HOGENOM" id="CLU_158040_3_0_6"/>
<dbReference type="PRO" id="PR:B7NDN9"/>
<dbReference type="Proteomes" id="UP000007097">
    <property type="component" value="Chromosome"/>
</dbReference>
<dbReference type="GO" id="GO:0003700">
    <property type="term" value="F:DNA-binding transcription factor activity"/>
    <property type="evidence" value="ECO:0007669"/>
    <property type="project" value="UniProtKB-UniRule"/>
</dbReference>
<dbReference type="GO" id="GO:0043565">
    <property type="term" value="F:sequence-specific DNA binding"/>
    <property type="evidence" value="ECO:0007669"/>
    <property type="project" value="InterPro"/>
</dbReference>
<dbReference type="FunFam" id="1.10.10.60:FF:000006">
    <property type="entry name" value="DNA-binding protein Fis"/>
    <property type="match status" value="1"/>
</dbReference>
<dbReference type="Gene3D" id="1.10.10.60">
    <property type="entry name" value="Homeodomain-like"/>
    <property type="match status" value="1"/>
</dbReference>
<dbReference type="HAMAP" id="MF_00166">
    <property type="entry name" value="DNA_binding_Fis"/>
    <property type="match status" value="1"/>
</dbReference>
<dbReference type="InterPro" id="IPR005412">
    <property type="entry name" value="Fis_DNA-bd"/>
</dbReference>
<dbReference type="InterPro" id="IPR009057">
    <property type="entry name" value="Homeodomain-like_sf"/>
</dbReference>
<dbReference type="InterPro" id="IPR002197">
    <property type="entry name" value="HTH_Fis"/>
</dbReference>
<dbReference type="InterPro" id="IPR050207">
    <property type="entry name" value="Trans_regulatory_Fis"/>
</dbReference>
<dbReference type="NCBIfam" id="NF001659">
    <property type="entry name" value="PRK00430.1"/>
    <property type="match status" value="1"/>
</dbReference>
<dbReference type="PANTHER" id="PTHR47918">
    <property type="entry name" value="DNA-BINDING PROTEIN FIS"/>
    <property type="match status" value="1"/>
</dbReference>
<dbReference type="PANTHER" id="PTHR47918:SF1">
    <property type="entry name" value="DNA-BINDING PROTEIN FIS"/>
    <property type="match status" value="1"/>
</dbReference>
<dbReference type="Pfam" id="PF02954">
    <property type="entry name" value="HTH_8"/>
    <property type="match status" value="1"/>
</dbReference>
<dbReference type="PIRSF" id="PIRSF002097">
    <property type="entry name" value="DNA-binding_Fis"/>
    <property type="match status" value="1"/>
</dbReference>
<dbReference type="PRINTS" id="PR01591">
    <property type="entry name" value="DNABINDNGFIS"/>
</dbReference>
<dbReference type="PRINTS" id="PR01590">
    <property type="entry name" value="HTHFIS"/>
</dbReference>
<dbReference type="SUPFAM" id="SSF46689">
    <property type="entry name" value="Homeodomain-like"/>
    <property type="match status" value="1"/>
</dbReference>
<keyword id="KW-0010">Activator</keyword>
<keyword id="KW-0238">DNA-binding</keyword>
<keyword id="KW-0804">Transcription</keyword>
<keyword id="KW-0805">Transcription regulation</keyword>
<feature type="chain" id="PRO_1000118224" description="DNA-binding protein Fis">
    <location>
        <begin position="1"/>
        <end position="98"/>
    </location>
</feature>
<feature type="DNA-binding region" description="H-T-H motif" evidence="1">
    <location>
        <begin position="74"/>
        <end position="93"/>
    </location>
</feature>
<name>FIS_ECOLU</name>
<reference key="1">
    <citation type="journal article" date="2009" name="PLoS Genet.">
        <title>Organised genome dynamics in the Escherichia coli species results in highly diverse adaptive paths.</title>
        <authorList>
            <person name="Touchon M."/>
            <person name="Hoede C."/>
            <person name="Tenaillon O."/>
            <person name="Barbe V."/>
            <person name="Baeriswyl S."/>
            <person name="Bidet P."/>
            <person name="Bingen E."/>
            <person name="Bonacorsi S."/>
            <person name="Bouchier C."/>
            <person name="Bouvet O."/>
            <person name="Calteau A."/>
            <person name="Chiapello H."/>
            <person name="Clermont O."/>
            <person name="Cruveiller S."/>
            <person name="Danchin A."/>
            <person name="Diard M."/>
            <person name="Dossat C."/>
            <person name="Karoui M.E."/>
            <person name="Frapy E."/>
            <person name="Garry L."/>
            <person name="Ghigo J.M."/>
            <person name="Gilles A.M."/>
            <person name="Johnson J."/>
            <person name="Le Bouguenec C."/>
            <person name="Lescat M."/>
            <person name="Mangenot S."/>
            <person name="Martinez-Jehanne V."/>
            <person name="Matic I."/>
            <person name="Nassif X."/>
            <person name="Oztas S."/>
            <person name="Petit M.A."/>
            <person name="Pichon C."/>
            <person name="Rouy Z."/>
            <person name="Ruf C.S."/>
            <person name="Schneider D."/>
            <person name="Tourret J."/>
            <person name="Vacherie B."/>
            <person name="Vallenet D."/>
            <person name="Medigue C."/>
            <person name="Rocha E.P.C."/>
            <person name="Denamur E."/>
        </authorList>
    </citation>
    <scope>NUCLEOTIDE SEQUENCE [LARGE SCALE GENOMIC DNA]</scope>
    <source>
        <strain>UMN026 / ExPEC</strain>
    </source>
</reference>
<accession>B7NDN9</accession>
<evidence type="ECO:0000255" key="1">
    <source>
        <dbReference type="HAMAP-Rule" id="MF_00166"/>
    </source>
</evidence>
<comment type="function">
    <text evidence="1">Activates ribosomal RNA transcription. Plays a direct role in upstream activation of rRNA promoters.</text>
</comment>
<comment type="subunit">
    <text evidence="1">Homodimer.</text>
</comment>
<comment type="similarity">
    <text evidence="1">Belongs to the transcriptional regulatory Fis family.</text>
</comment>
<sequence length="98" mass="11240">MFEQRVNSDVLTVSTVNSQDQVTQKPLRDSVKQALKNYFAQLNGQDVNDLYELVLAEVEQPLLDMVMQYTRGNQTRAALMMGINRGTLRKKLKKYGMN</sequence>
<proteinExistence type="inferred from homology"/>